<protein>
    <recommendedName>
        <fullName evidence="1">Protease HtpX homolog</fullName>
        <ecNumber evidence="1">3.4.24.-</ecNumber>
    </recommendedName>
</protein>
<feature type="chain" id="PRO_1000124224" description="Protease HtpX homolog">
    <location>
        <begin position="1"/>
        <end position="316"/>
    </location>
</feature>
<feature type="transmembrane region" description="Helical" evidence="1">
    <location>
        <begin position="16"/>
        <end position="36"/>
    </location>
</feature>
<feature type="transmembrane region" description="Helical" evidence="1">
    <location>
        <begin position="149"/>
        <end position="169"/>
    </location>
</feature>
<feature type="transmembrane region" description="Helical" evidence="1">
    <location>
        <begin position="180"/>
        <end position="200"/>
    </location>
</feature>
<feature type="region of interest" description="Disordered" evidence="2">
    <location>
        <begin position="295"/>
        <end position="316"/>
    </location>
</feature>
<feature type="active site" evidence="1">
    <location>
        <position position="135"/>
    </location>
</feature>
<feature type="binding site" evidence="1">
    <location>
        <position position="134"/>
    </location>
    <ligand>
        <name>Zn(2+)</name>
        <dbReference type="ChEBI" id="CHEBI:29105"/>
        <note>catalytic</note>
    </ligand>
</feature>
<feature type="binding site" evidence="1">
    <location>
        <position position="138"/>
    </location>
    <ligand>
        <name>Zn(2+)</name>
        <dbReference type="ChEBI" id="CHEBI:29105"/>
        <note>catalytic</note>
    </ligand>
</feature>
<feature type="binding site" evidence="1">
    <location>
        <position position="209"/>
    </location>
    <ligand>
        <name>Zn(2+)</name>
        <dbReference type="ChEBI" id="CHEBI:29105"/>
        <note>catalytic</note>
    </ligand>
</feature>
<accession>B8H051</accession>
<reference key="1">
    <citation type="journal article" date="2010" name="J. Bacteriol.">
        <title>The genetic basis of laboratory adaptation in Caulobacter crescentus.</title>
        <authorList>
            <person name="Marks M.E."/>
            <person name="Castro-Rojas C.M."/>
            <person name="Teiling C."/>
            <person name="Du L."/>
            <person name="Kapatral V."/>
            <person name="Walunas T.L."/>
            <person name="Crosson S."/>
        </authorList>
    </citation>
    <scope>NUCLEOTIDE SEQUENCE [LARGE SCALE GENOMIC DNA]</scope>
    <source>
        <strain>NA1000 / CB15N</strain>
    </source>
</reference>
<name>HTPX_CAUVN</name>
<gene>
    <name evidence="1" type="primary">htpX</name>
    <name type="ordered locus">CCNA_02594</name>
</gene>
<evidence type="ECO:0000255" key="1">
    <source>
        <dbReference type="HAMAP-Rule" id="MF_00188"/>
    </source>
</evidence>
<evidence type="ECO:0000256" key="2">
    <source>
        <dbReference type="SAM" id="MobiDB-lite"/>
    </source>
</evidence>
<organism>
    <name type="scientific">Caulobacter vibrioides (strain NA1000 / CB15N)</name>
    <name type="common">Caulobacter crescentus</name>
    <dbReference type="NCBI Taxonomy" id="565050"/>
    <lineage>
        <taxon>Bacteria</taxon>
        <taxon>Pseudomonadati</taxon>
        <taxon>Pseudomonadota</taxon>
        <taxon>Alphaproteobacteria</taxon>
        <taxon>Caulobacterales</taxon>
        <taxon>Caulobacteraceae</taxon>
        <taxon>Caulobacter</taxon>
    </lineage>
</organism>
<dbReference type="EC" id="3.4.24.-" evidence="1"/>
<dbReference type="EMBL" id="CP001340">
    <property type="protein sequence ID" value="ACL96059.1"/>
    <property type="molecule type" value="Genomic_DNA"/>
</dbReference>
<dbReference type="RefSeq" id="WP_010920366.1">
    <property type="nucleotide sequence ID" value="NC_011916.1"/>
</dbReference>
<dbReference type="RefSeq" id="YP_002517967.1">
    <property type="nucleotide sequence ID" value="NC_011916.1"/>
</dbReference>
<dbReference type="SMR" id="B8H051"/>
<dbReference type="GeneID" id="7332944"/>
<dbReference type="KEGG" id="ccs:CCNA_02594"/>
<dbReference type="PATRIC" id="fig|565050.3.peg.2544"/>
<dbReference type="HOGENOM" id="CLU_042266_3_0_5"/>
<dbReference type="OrthoDB" id="15218at2"/>
<dbReference type="PhylomeDB" id="B8H051"/>
<dbReference type="Proteomes" id="UP000001364">
    <property type="component" value="Chromosome"/>
</dbReference>
<dbReference type="GO" id="GO:0005886">
    <property type="term" value="C:plasma membrane"/>
    <property type="evidence" value="ECO:0007669"/>
    <property type="project" value="UniProtKB-SubCell"/>
</dbReference>
<dbReference type="GO" id="GO:0004222">
    <property type="term" value="F:metalloendopeptidase activity"/>
    <property type="evidence" value="ECO:0007669"/>
    <property type="project" value="UniProtKB-UniRule"/>
</dbReference>
<dbReference type="GO" id="GO:0008270">
    <property type="term" value="F:zinc ion binding"/>
    <property type="evidence" value="ECO:0007669"/>
    <property type="project" value="UniProtKB-UniRule"/>
</dbReference>
<dbReference type="GO" id="GO:0006508">
    <property type="term" value="P:proteolysis"/>
    <property type="evidence" value="ECO:0007669"/>
    <property type="project" value="UniProtKB-KW"/>
</dbReference>
<dbReference type="CDD" id="cd07336">
    <property type="entry name" value="M48B_HtpX_like"/>
    <property type="match status" value="1"/>
</dbReference>
<dbReference type="Gene3D" id="3.30.2010.10">
    <property type="entry name" value="Metalloproteases ('zincins'), catalytic domain"/>
    <property type="match status" value="1"/>
</dbReference>
<dbReference type="HAMAP" id="MF_00188">
    <property type="entry name" value="Pept_M48_protease_HtpX"/>
    <property type="match status" value="1"/>
</dbReference>
<dbReference type="InterPro" id="IPR050083">
    <property type="entry name" value="HtpX_protease"/>
</dbReference>
<dbReference type="InterPro" id="IPR022919">
    <property type="entry name" value="Pept_M48_protease_HtpX"/>
</dbReference>
<dbReference type="InterPro" id="IPR001915">
    <property type="entry name" value="Peptidase_M48"/>
</dbReference>
<dbReference type="NCBIfam" id="NF002363">
    <property type="entry name" value="PRK01345.1"/>
    <property type="match status" value="1"/>
</dbReference>
<dbReference type="NCBIfam" id="NF002826">
    <property type="entry name" value="PRK03001.1"/>
    <property type="match status" value="1"/>
</dbReference>
<dbReference type="PANTHER" id="PTHR43221">
    <property type="entry name" value="PROTEASE HTPX"/>
    <property type="match status" value="1"/>
</dbReference>
<dbReference type="PANTHER" id="PTHR43221:SF1">
    <property type="entry name" value="PROTEASE HTPX"/>
    <property type="match status" value="1"/>
</dbReference>
<dbReference type="Pfam" id="PF01435">
    <property type="entry name" value="Peptidase_M48"/>
    <property type="match status" value="1"/>
</dbReference>
<comment type="cofactor">
    <cofactor evidence="1">
        <name>Zn(2+)</name>
        <dbReference type="ChEBI" id="CHEBI:29105"/>
    </cofactor>
    <text evidence="1">Binds 1 zinc ion per subunit.</text>
</comment>
<comment type="subcellular location">
    <subcellularLocation>
        <location evidence="1">Cell inner membrane</location>
        <topology evidence="1">Multi-pass membrane protein</topology>
    </subcellularLocation>
</comment>
<comment type="similarity">
    <text evidence="1">Belongs to the peptidase M48B family.</text>
</comment>
<proteinExistence type="inferred from homology"/>
<keyword id="KW-0997">Cell inner membrane</keyword>
<keyword id="KW-1003">Cell membrane</keyword>
<keyword id="KW-0378">Hydrolase</keyword>
<keyword id="KW-0472">Membrane</keyword>
<keyword id="KW-0479">Metal-binding</keyword>
<keyword id="KW-0482">Metalloprotease</keyword>
<keyword id="KW-0645">Protease</keyword>
<keyword id="KW-1185">Reference proteome</keyword>
<keyword id="KW-0812">Transmembrane</keyword>
<keyword id="KW-1133">Transmembrane helix</keyword>
<keyword id="KW-0862">Zinc</keyword>
<sequence length="316" mass="33539">MNHFKTYMLLAGLTALFMGAGFLIGGATGMMIALVFALAMNAFSYWNADKIVLRTYGAVEVDESHPEPLIRNYVIDTVEMARSAGLPRPRITVIDSAQPNAFATGRDPDHAAVAASTGLLQLLTREEIRGVMAHELAHVKNRDTLVMTVTATIAGAISALANFAFFFGGSRDEEGNGGGLGGMIGAILIAILAPIAAMLVQMAISRAREYEADRIGAQIAGDSESLARALQKIEAYARGGYENVQAERNPATAHMFIINPLAGKGADNLFSTHPATHNRVEALMRLGVERGARRPVMAATTSSSVPLSGERGGPWS</sequence>